<feature type="chain" id="PRO_0000254819" description="Cytochrome b">
    <location>
        <begin position="1"/>
        <end position="379"/>
    </location>
</feature>
<feature type="transmembrane region" description="Helical" evidence="2">
    <location>
        <begin position="33"/>
        <end position="53"/>
    </location>
</feature>
<feature type="transmembrane region" description="Helical" evidence="2">
    <location>
        <begin position="77"/>
        <end position="98"/>
    </location>
</feature>
<feature type="transmembrane region" description="Helical" evidence="2">
    <location>
        <begin position="113"/>
        <end position="133"/>
    </location>
</feature>
<feature type="transmembrane region" description="Helical" evidence="2">
    <location>
        <begin position="178"/>
        <end position="198"/>
    </location>
</feature>
<feature type="transmembrane region" description="Helical" evidence="2">
    <location>
        <begin position="226"/>
        <end position="246"/>
    </location>
</feature>
<feature type="transmembrane region" description="Helical" evidence="2">
    <location>
        <begin position="288"/>
        <end position="308"/>
    </location>
</feature>
<feature type="transmembrane region" description="Helical" evidence="2">
    <location>
        <begin position="320"/>
        <end position="340"/>
    </location>
</feature>
<feature type="transmembrane region" description="Helical" evidence="2">
    <location>
        <begin position="347"/>
        <end position="367"/>
    </location>
</feature>
<feature type="binding site" description="axial binding residue" evidence="2">
    <location>
        <position position="83"/>
    </location>
    <ligand>
        <name>heme b</name>
        <dbReference type="ChEBI" id="CHEBI:60344"/>
        <label>b562</label>
    </ligand>
    <ligandPart>
        <name>Fe</name>
        <dbReference type="ChEBI" id="CHEBI:18248"/>
    </ligandPart>
</feature>
<feature type="binding site" description="axial binding residue" evidence="2">
    <location>
        <position position="97"/>
    </location>
    <ligand>
        <name>heme b</name>
        <dbReference type="ChEBI" id="CHEBI:60344"/>
        <label>b566</label>
    </ligand>
    <ligandPart>
        <name>Fe</name>
        <dbReference type="ChEBI" id="CHEBI:18248"/>
    </ligandPart>
</feature>
<feature type="binding site" description="axial binding residue" evidence="2">
    <location>
        <position position="182"/>
    </location>
    <ligand>
        <name>heme b</name>
        <dbReference type="ChEBI" id="CHEBI:60344"/>
        <label>b562</label>
    </ligand>
    <ligandPart>
        <name>Fe</name>
        <dbReference type="ChEBI" id="CHEBI:18248"/>
    </ligandPart>
</feature>
<feature type="binding site" description="axial binding residue" evidence="2">
    <location>
        <position position="196"/>
    </location>
    <ligand>
        <name>heme b</name>
        <dbReference type="ChEBI" id="CHEBI:60344"/>
        <label>b566</label>
    </ligand>
    <ligandPart>
        <name>Fe</name>
        <dbReference type="ChEBI" id="CHEBI:18248"/>
    </ligandPart>
</feature>
<feature type="binding site" evidence="2">
    <location>
        <position position="201"/>
    </location>
    <ligand>
        <name>a ubiquinone</name>
        <dbReference type="ChEBI" id="CHEBI:16389"/>
    </ligand>
</feature>
<protein>
    <recommendedName>
        <fullName>Cytochrome b</fullName>
    </recommendedName>
    <alternativeName>
        <fullName>Complex III subunit 3</fullName>
    </alternativeName>
    <alternativeName>
        <fullName>Complex III subunit III</fullName>
    </alternativeName>
    <alternativeName>
        <fullName>Cytochrome b-c1 complex subunit 3</fullName>
    </alternativeName>
    <alternativeName>
        <fullName>Ubiquinol-cytochrome-c reductase complex cytochrome b subunit</fullName>
    </alternativeName>
</protein>
<sequence>MTNIRKSHPLFKIINDSLIDLPAPSSISSWWNFGSLLGICLGIQILTGLFLAMHYTSDTATAFQSVTHICRDVNYGWILRYLHANGASMFFICLFLHVGRGLYYGSYTFMETWNVGILLLFAVMATAFMGYVLPWGQMSFWGATVITNLLSAIPYIGTDLVEWIWGGFSVDKATLTRFFAFHFLLPFIIAALVMVHLLFLHETGSNNPTGIPSNMDMIPFHPYYTIKDVLGALAMALVLLTLVLFSPDLLGDPDNYTPANPLSTPPHIKPEWYFLFAYAILRSIPNKLGGVLALVLSILVLALMPLLHTSKQRSMMFRPLSQCLFWLLVADLLTLTWIGGQPVEHPFIIIGQLASILYFSLILVLMPLISIVENHLLKW</sequence>
<dbReference type="EMBL" id="DQ445710">
    <property type="protein sequence ID" value="ABE02430.1"/>
    <property type="molecule type" value="Genomic_DNA"/>
</dbReference>
<dbReference type="SMR" id="Q1PG51"/>
<dbReference type="GO" id="GO:0005743">
    <property type="term" value="C:mitochondrial inner membrane"/>
    <property type="evidence" value="ECO:0007669"/>
    <property type="project" value="UniProtKB-SubCell"/>
</dbReference>
<dbReference type="GO" id="GO:0045275">
    <property type="term" value="C:respiratory chain complex III"/>
    <property type="evidence" value="ECO:0007669"/>
    <property type="project" value="InterPro"/>
</dbReference>
<dbReference type="GO" id="GO:0046872">
    <property type="term" value="F:metal ion binding"/>
    <property type="evidence" value="ECO:0007669"/>
    <property type="project" value="UniProtKB-KW"/>
</dbReference>
<dbReference type="GO" id="GO:0008121">
    <property type="term" value="F:ubiquinol-cytochrome-c reductase activity"/>
    <property type="evidence" value="ECO:0007669"/>
    <property type="project" value="InterPro"/>
</dbReference>
<dbReference type="GO" id="GO:0006122">
    <property type="term" value="P:mitochondrial electron transport, ubiquinol to cytochrome c"/>
    <property type="evidence" value="ECO:0007669"/>
    <property type="project" value="TreeGrafter"/>
</dbReference>
<dbReference type="CDD" id="cd00290">
    <property type="entry name" value="cytochrome_b_C"/>
    <property type="match status" value="1"/>
</dbReference>
<dbReference type="CDD" id="cd00284">
    <property type="entry name" value="Cytochrome_b_N"/>
    <property type="match status" value="1"/>
</dbReference>
<dbReference type="FunFam" id="1.20.810.10:FF:000002">
    <property type="entry name" value="Cytochrome b"/>
    <property type="match status" value="1"/>
</dbReference>
<dbReference type="Gene3D" id="1.20.810.10">
    <property type="entry name" value="Cytochrome Bc1 Complex, Chain C"/>
    <property type="match status" value="1"/>
</dbReference>
<dbReference type="InterPro" id="IPR005798">
    <property type="entry name" value="Cyt_b/b6_C"/>
</dbReference>
<dbReference type="InterPro" id="IPR036150">
    <property type="entry name" value="Cyt_b/b6_C_sf"/>
</dbReference>
<dbReference type="InterPro" id="IPR005797">
    <property type="entry name" value="Cyt_b/b6_N"/>
</dbReference>
<dbReference type="InterPro" id="IPR027387">
    <property type="entry name" value="Cytb/b6-like_sf"/>
</dbReference>
<dbReference type="InterPro" id="IPR030689">
    <property type="entry name" value="Cytochrome_b"/>
</dbReference>
<dbReference type="InterPro" id="IPR048260">
    <property type="entry name" value="Cytochrome_b_C_euk/bac"/>
</dbReference>
<dbReference type="InterPro" id="IPR048259">
    <property type="entry name" value="Cytochrome_b_N_euk/bac"/>
</dbReference>
<dbReference type="InterPro" id="IPR016174">
    <property type="entry name" value="Di-haem_cyt_TM"/>
</dbReference>
<dbReference type="PANTHER" id="PTHR19271">
    <property type="entry name" value="CYTOCHROME B"/>
    <property type="match status" value="1"/>
</dbReference>
<dbReference type="PANTHER" id="PTHR19271:SF16">
    <property type="entry name" value="CYTOCHROME B"/>
    <property type="match status" value="1"/>
</dbReference>
<dbReference type="Pfam" id="PF00032">
    <property type="entry name" value="Cytochrom_B_C"/>
    <property type="match status" value="1"/>
</dbReference>
<dbReference type="Pfam" id="PF00033">
    <property type="entry name" value="Cytochrome_B"/>
    <property type="match status" value="1"/>
</dbReference>
<dbReference type="PIRSF" id="PIRSF038885">
    <property type="entry name" value="COB"/>
    <property type="match status" value="1"/>
</dbReference>
<dbReference type="SUPFAM" id="SSF81648">
    <property type="entry name" value="a domain/subunit of cytochrome bc1 complex (Ubiquinol-cytochrome c reductase)"/>
    <property type="match status" value="1"/>
</dbReference>
<dbReference type="SUPFAM" id="SSF81342">
    <property type="entry name" value="Transmembrane di-heme cytochromes"/>
    <property type="match status" value="1"/>
</dbReference>
<dbReference type="PROSITE" id="PS51003">
    <property type="entry name" value="CYTB_CTER"/>
    <property type="match status" value="1"/>
</dbReference>
<dbReference type="PROSITE" id="PS51002">
    <property type="entry name" value="CYTB_NTER"/>
    <property type="match status" value="1"/>
</dbReference>
<comment type="function">
    <text evidence="2">Component of the ubiquinol-cytochrome c reductase complex (complex III or cytochrome b-c1 complex) that is part of the mitochondrial respiratory chain. The b-c1 complex mediates electron transfer from ubiquinol to cytochrome c. Contributes to the generation of a proton gradient across the mitochondrial membrane that is then used for ATP synthesis.</text>
</comment>
<comment type="cofactor">
    <cofactor evidence="2">
        <name>heme b</name>
        <dbReference type="ChEBI" id="CHEBI:60344"/>
    </cofactor>
    <text evidence="2">Binds 2 heme b groups non-covalently.</text>
</comment>
<comment type="subunit">
    <text evidence="2">The cytochrome bc1 complex contains 11 subunits: 3 respiratory subunits (MT-CYB, CYC1 and UQCRFS1), 2 core proteins (UQCRC1 and UQCRC2) and 6 low-molecular weight proteins (UQCRH/QCR6, UQCRB/QCR7, UQCRQ/QCR8, UQCR10/QCR9, UQCR11/QCR10 and a cleavage product of UQCRFS1). This cytochrome bc1 complex then forms a dimer.</text>
</comment>
<comment type="subcellular location">
    <subcellularLocation>
        <location evidence="2">Mitochondrion inner membrane</location>
        <topology evidence="2">Multi-pass membrane protein</topology>
    </subcellularLocation>
</comment>
<comment type="miscellaneous">
    <text evidence="1">Heme 1 (or BL or b562) is low-potential and absorbs at about 562 nm, and heme 2 (or BH or b566) is high-potential and absorbs at about 566 nm.</text>
</comment>
<comment type="similarity">
    <text evidence="3 4">Belongs to the cytochrome b family.</text>
</comment>
<comment type="caution">
    <text evidence="2">The full-length protein contains only eight transmembrane helices, not nine as predicted by bioinformatics tools.</text>
</comment>
<organism>
    <name type="scientific">Megaloglossus woermanni</name>
    <name type="common">African long-tongued fruit bat</name>
    <dbReference type="NCBI Taxonomy" id="58073"/>
    <lineage>
        <taxon>Eukaryota</taxon>
        <taxon>Metazoa</taxon>
        <taxon>Chordata</taxon>
        <taxon>Craniata</taxon>
        <taxon>Vertebrata</taxon>
        <taxon>Euteleostomi</taxon>
        <taxon>Mammalia</taxon>
        <taxon>Eutheria</taxon>
        <taxon>Laurasiatheria</taxon>
        <taxon>Chiroptera</taxon>
        <taxon>Yinpterochiroptera</taxon>
        <taxon>Pteropodoidea</taxon>
        <taxon>Pteropodidae</taxon>
        <taxon>Epomophorinae</taxon>
        <taxon>Myonycterini</taxon>
        <taxon>Megaloglossus</taxon>
    </lineage>
</organism>
<accession>Q1PG51</accession>
<name>CYB_MEGWO</name>
<keyword id="KW-0249">Electron transport</keyword>
<keyword id="KW-0349">Heme</keyword>
<keyword id="KW-0408">Iron</keyword>
<keyword id="KW-0472">Membrane</keyword>
<keyword id="KW-0479">Metal-binding</keyword>
<keyword id="KW-0496">Mitochondrion</keyword>
<keyword id="KW-0999">Mitochondrion inner membrane</keyword>
<keyword id="KW-0679">Respiratory chain</keyword>
<keyword id="KW-0812">Transmembrane</keyword>
<keyword id="KW-1133">Transmembrane helix</keyword>
<keyword id="KW-0813">Transport</keyword>
<keyword id="KW-0830">Ubiquinone</keyword>
<proteinExistence type="inferred from homology"/>
<reference key="1">
    <citation type="submission" date="2006-03" db="EMBL/GenBank/DDBJ databases">
        <title>Phylogenetic relationships of the enigmatic harpy fruit bat, Harpyionycteris (Mammalia: Chiroptera: Pteropodidae).</title>
        <authorList>
            <person name="Giannini N.P."/>
            <person name="Almeida F.C."/>
            <person name="DeSalle R."/>
            <person name="Simmons N.B."/>
        </authorList>
    </citation>
    <scope>NUCLEOTIDE SEQUENCE [GENOMIC DNA]</scope>
    <source>
        <strain>Isolate 11</strain>
    </source>
</reference>
<gene>
    <name type="primary">MT-CYB</name>
    <name type="synonym">COB</name>
    <name type="synonym">CYTB</name>
    <name type="synonym">MTCYB</name>
</gene>
<geneLocation type="mitochondrion"/>
<evidence type="ECO:0000250" key="1"/>
<evidence type="ECO:0000250" key="2">
    <source>
        <dbReference type="UniProtKB" id="P00157"/>
    </source>
</evidence>
<evidence type="ECO:0000255" key="3">
    <source>
        <dbReference type="PROSITE-ProRule" id="PRU00967"/>
    </source>
</evidence>
<evidence type="ECO:0000255" key="4">
    <source>
        <dbReference type="PROSITE-ProRule" id="PRU00968"/>
    </source>
</evidence>